<protein>
    <recommendedName>
        <fullName>Putative uncharacterized protein YIR044C</fullName>
    </recommendedName>
</protein>
<name>YIW4_YEAST</name>
<reference key="1">
    <citation type="journal article" date="1997" name="Nature">
        <title>The nucleotide sequence of Saccharomyces cerevisiae chromosome IX.</title>
        <authorList>
            <person name="Churcher C.M."/>
            <person name="Bowman S."/>
            <person name="Badcock K."/>
            <person name="Bankier A.T."/>
            <person name="Brown D."/>
            <person name="Chillingworth T."/>
            <person name="Connor R."/>
            <person name="Devlin K."/>
            <person name="Gentles S."/>
            <person name="Hamlin N."/>
            <person name="Harris D.E."/>
            <person name="Horsnell T."/>
            <person name="Hunt S."/>
            <person name="Jagels K."/>
            <person name="Jones M."/>
            <person name="Lye G."/>
            <person name="Moule S."/>
            <person name="Odell C."/>
            <person name="Pearson D."/>
            <person name="Rajandream M.A."/>
            <person name="Rice P."/>
            <person name="Rowley N."/>
            <person name="Skelton J."/>
            <person name="Smith V."/>
            <person name="Walsh S.V."/>
            <person name="Whitehead S."/>
            <person name="Barrell B.G."/>
        </authorList>
    </citation>
    <scope>NUCLEOTIDE SEQUENCE [LARGE SCALE GENOMIC DNA]</scope>
    <source>
        <strain>ATCC 204508 / S288c</strain>
    </source>
</reference>
<reference key="2">
    <citation type="journal article" date="2014" name="G3 (Bethesda)">
        <title>The reference genome sequence of Saccharomyces cerevisiae: Then and now.</title>
        <authorList>
            <person name="Engel S.R."/>
            <person name="Dietrich F.S."/>
            <person name="Fisk D.G."/>
            <person name="Binkley G."/>
            <person name="Balakrishnan R."/>
            <person name="Costanzo M.C."/>
            <person name="Dwight S.S."/>
            <person name="Hitz B.C."/>
            <person name="Karra K."/>
            <person name="Nash R.S."/>
            <person name="Weng S."/>
            <person name="Wong E.D."/>
            <person name="Lloyd P."/>
            <person name="Skrzypek M.S."/>
            <person name="Miyasato S.R."/>
            <person name="Simison M."/>
            <person name="Cherry J.M."/>
        </authorList>
    </citation>
    <scope>GENOME REANNOTATION</scope>
    <source>
        <strain>ATCC 204508 / S288c</strain>
    </source>
</reference>
<reference key="3">
    <citation type="journal article" date="2007" name="Genome Res.">
        <title>Approaching a complete repository of sequence-verified protein-encoding clones for Saccharomyces cerevisiae.</title>
        <authorList>
            <person name="Hu Y."/>
            <person name="Rolfs A."/>
            <person name="Bhullar B."/>
            <person name="Murthy T.V.S."/>
            <person name="Zhu C."/>
            <person name="Berger M.F."/>
            <person name="Camargo A.A."/>
            <person name="Kelley F."/>
            <person name="McCarron S."/>
            <person name="Jepson D."/>
            <person name="Richardson A."/>
            <person name="Raphael J."/>
            <person name="Moreira D."/>
            <person name="Taycher E."/>
            <person name="Zuo D."/>
            <person name="Mohr S."/>
            <person name="Kane M.F."/>
            <person name="Williamson J."/>
            <person name="Simpson A.J.G."/>
            <person name="Bulyk M.L."/>
            <person name="Harlow E."/>
            <person name="Marsischky G."/>
            <person name="Kolodner R.D."/>
            <person name="LaBaer J."/>
        </authorList>
    </citation>
    <scope>NUCLEOTIDE SEQUENCE [GENOMIC DNA]</scope>
    <source>
        <strain>ATCC 204508 / S288c</strain>
    </source>
</reference>
<dbReference type="EMBL" id="Z46902">
    <property type="status" value="NOT_ANNOTATED_CDS"/>
    <property type="molecule type" value="Genomic_DNA"/>
</dbReference>
<dbReference type="EMBL" id="AY557843">
    <property type="protein sequence ID" value="AAS56169.1"/>
    <property type="molecule type" value="Genomic_DNA"/>
</dbReference>
<dbReference type="PIR" id="S53576">
    <property type="entry name" value="S53576"/>
</dbReference>
<dbReference type="DIP" id="DIP-1519N"/>
<dbReference type="IntAct" id="P40588">
    <property type="interactions" value="3"/>
</dbReference>
<dbReference type="MINT" id="P40588"/>
<dbReference type="SGD" id="S000001483">
    <property type="gene designation" value="YIR044C"/>
</dbReference>
<proteinExistence type="uncertain"/>
<sequence length="61" mass="7428">MKENEVKDEKSVDVLSFKQLESQKTVLPQDVFRNELTWFCYEIYKSLAFRIWMLLWLPLSI</sequence>
<organism>
    <name type="scientific">Saccharomyces cerevisiae (strain ATCC 204508 / S288c)</name>
    <name type="common">Baker's yeast</name>
    <dbReference type="NCBI Taxonomy" id="559292"/>
    <lineage>
        <taxon>Eukaryota</taxon>
        <taxon>Fungi</taxon>
        <taxon>Dikarya</taxon>
        <taxon>Ascomycota</taxon>
        <taxon>Saccharomycotina</taxon>
        <taxon>Saccharomycetes</taxon>
        <taxon>Saccharomycetales</taxon>
        <taxon>Saccharomycetaceae</taxon>
        <taxon>Saccharomyces</taxon>
    </lineage>
</organism>
<feature type="chain" id="PRO_0000207535" description="Putative uncharacterized protein YIR044C">
    <location>
        <begin position="1"/>
        <end position="61"/>
    </location>
</feature>
<evidence type="ECO:0000305" key="1"/>
<evidence type="ECO:0000305" key="2">
    <source>
    </source>
</evidence>
<comment type="similarity">
    <text evidence="1">Belongs to the DUP/COS family.</text>
</comment>
<comment type="caution">
    <text evidence="2">Could be the product of a pseudogene unlikely to encode a functional protein. This is a truncated version of a DUP/COS protein family member. Because of that it is not part of the S.cerevisiae S288c complete/reference proteome set.</text>
</comment>
<gene>
    <name type="ordered locus">YIR044C</name>
</gene>
<accession>P40588</accession>